<evidence type="ECO:0000250" key="1">
    <source>
        <dbReference type="UniProtKB" id="P33760"/>
    </source>
</evidence>
<evidence type="ECO:0000255" key="2"/>
<evidence type="ECO:0000305" key="3"/>
<organism>
    <name type="scientific">Kluyveromyces lactis (strain ATCC 8585 / CBS 2359 / DSM 70799 / NBRC 1267 / NRRL Y-1140 / WM37)</name>
    <name type="common">Yeast</name>
    <name type="synonym">Candida sphaerica</name>
    <dbReference type="NCBI Taxonomy" id="284590"/>
    <lineage>
        <taxon>Eukaryota</taxon>
        <taxon>Fungi</taxon>
        <taxon>Dikarya</taxon>
        <taxon>Ascomycota</taxon>
        <taxon>Saccharomycotina</taxon>
        <taxon>Saccharomycetes</taxon>
        <taxon>Saccharomycetales</taxon>
        <taxon>Saccharomycetaceae</taxon>
        <taxon>Kluyveromyces</taxon>
    </lineage>
</organism>
<feature type="chain" id="PRO_0000084614" description="Peroxisomal ATPase PEX6">
    <location>
        <begin position="1"/>
        <end position="1000"/>
    </location>
</feature>
<feature type="binding site" evidence="2">
    <location>
        <begin position="742"/>
        <end position="749"/>
    </location>
    <ligand>
        <name>ATP</name>
        <dbReference type="ChEBI" id="CHEBI:30616"/>
    </ligand>
</feature>
<reference key="1">
    <citation type="journal article" date="2004" name="Nature">
        <title>Genome evolution in yeasts.</title>
        <authorList>
            <person name="Dujon B."/>
            <person name="Sherman D."/>
            <person name="Fischer G."/>
            <person name="Durrens P."/>
            <person name="Casaregola S."/>
            <person name="Lafontaine I."/>
            <person name="de Montigny J."/>
            <person name="Marck C."/>
            <person name="Neuveglise C."/>
            <person name="Talla E."/>
            <person name="Goffard N."/>
            <person name="Frangeul L."/>
            <person name="Aigle M."/>
            <person name="Anthouard V."/>
            <person name="Babour A."/>
            <person name="Barbe V."/>
            <person name="Barnay S."/>
            <person name="Blanchin S."/>
            <person name="Beckerich J.-M."/>
            <person name="Beyne E."/>
            <person name="Bleykasten C."/>
            <person name="Boisrame A."/>
            <person name="Boyer J."/>
            <person name="Cattolico L."/>
            <person name="Confanioleri F."/>
            <person name="de Daruvar A."/>
            <person name="Despons L."/>
            <person name="Fabre E."/>
            <person name="Fairhead C."/>
            <person name="Ferry-Dumazet H."/>
            <person name="Groppi A."/>
            <person name="Hantraye F."/>
            <person name="Hennequin C."/>
            <person name="Jauniaux N."/>
            <person name="Joyet P."/>
            <person name="Kachouri R."/>
            <person name="Kerrest A."/>
            <person name="Koszul R."/>
            <person name="Lemaire M."/>
            <person name="Lesur I."/>
            <person name="Ma L."/>
            <person name="Muller H."/>
            <person name="Nicaud J.-M."/>
            <person name="Nikolski M."/>
            <person name="Oztas S."/>
            <person name="Ozier-Kalogeropoulos O."/>
            <person name="Pellenz S."/>
            <person name="Potier S."/>
            <person name="Richard G.-F."/>
            <person name="Straub M.-L."/>
            <person name="Suleau A."/>
            <person name="Swennen D."/>
            <person name="Tekaia F."/>
            <person name="Wesolowski-Louvel M."/>
            <person name="Westhof E."/>
            <person name="Wirth B."/>
            <person name="Zeniou-Meyer M."/>
            <person name="Zivanovic Y."/>
            <person name="Bolotin-Fukuhara M."/>
            <person name="Thierry A."/>
            <person name="Bouchier C."/>
            <person name="Caudron B."/>
            <person name="Scarpelli C."/>
            <person name="Gaillardin C."/>
            <person name="Weissenbach J."/>
            <person name="Wincker P."/>
            <person name="Souciet J.-L."/>
        </authorList>
    </citation>
    <scope>NUCLEOTIDE SEQUENCE [LARGE SCALE GENOMIC DNA]</scope>
    <source>
        <strain>ATCC 8585 / CBS 2359 / DSM 70799 / NBRC 1267 / NRRL Y-1140 / WM37</strain>
    </source>
</reference>
<gene>
    <name type="primary">PEX6</name>
    <name type="ordered locus">KLLA0E02002g</name>
</gene>
<name>PEX6_KLULA</name>
<dbReference type="EC" id="3.6.4.-" evidence="1"/>
<dbReference type="EMBL" id="CR382125">
    <property type="protein sequence ID" value="CAG99125.1"/>
    <property type="molecule type" value="Genomic_DNA"/>
</dbReference>
<dbReference type="RefSeq" id="XP_454038.1">
    <property type="nucleotide sequence ID" value="XM_454038.1"/>
</dbReference>
<dbReference type="SMR" id="Q6CPV1"/>
<dbReference type="FunCoup" id="Q6CPV1">
    <property type="interactions" value="300"/>
</dbReference>
<dbReference type="STRING" id="284590.Q6CPV1"/>
<dbReference type="PaxDb" id="284590-Q6CPV1"/>
<dbReference type="KEGG" id="kla:KLLA0_E02003g"/>
<dbReference type="eggNOG" id="KOG0736">
    <property type="taxonomic scope" value="Eukaryota"/>
</dbReference>
<dbReference type="HOGENOM" id="CLU_000688_0_4_1"/>
<dbReference type="InParanoid" id="Q6CPV1"/>
<dbReference type="OMA" id="DSMLNAM"/>
<dbReference type="Proteomes" id="UP000000598">
    <property type="component" value="Chromosome E"/>
</dbReference>
<dbReference type="GO" id="GO:0005829">
    <property type="term" value="C:cytosol"/>
    <property type="evidence" value="ECO:0007669"/>
    <property type="project" value="UniProtKB-SubCell"/>
</dbReference>
<dbReference type="GO" id="GO:0005778">
    <property type="term" value="C:peroxisomal membrane"/>
    <property type="evidence" value="ECO:0007669"/>
    <property type="project" value="UniProtKB-SubCell"/>
</dbReference>
<dbReference type="GO" id="GO:0005524">
    <property type="term" value="F:ATP binding"/>
    <property type="evidence" value="ECO:0007669"/>
    <property type="project" value="UniProtKB-KW"/>
</dbReference>
<dbReference type="GO" id="GO:0016887">
    <property type="term" value="F:ATP hydrolysis activity"/>
    <property type="evidence" value="ECO:0007669"/>
    <property type="project" value="InterPro"/>
</dbReference>
<dbReference type="GO" id="GO:0016558">
    <property type="term" value="P:protein import into peroxisome matrix"/>
    <property type="evidence" value="ECO:0007669"/>
    <property type="project" value="TreeGrafter"/>
</dbReference>
<dbReference type="CDD" id="cd19527">
    <property type="entry name" value="RecA-like_PEX6_r2"/>
    <property type="match status" value="1"/>
</dbReference>
<dbReference type="FunFam" id="3.40.50.300:FF:000109">
    <property type="entry name" value="Peroxisomal biogenesis factor 6"/>
    <property type="match status" value="1"/>
</dbReference>
<dbReference type="FunFam" id="1.10.8.60:FF:000039">
    <property type="entry name" value="peroxisome biogenesis factor 6"/>
    <property type="match status" value="1"/>
</dbReference>
<dbReference type="Gene3D" id="1.10.8.60">
    <property type="match status" value="1"/>
</dbReference>
<dbReference type="Gene3D" id="3.40.50.300">
    <property type="entry name" value="P-loop containing nucleotide triphosphate hydrolases"/>
    <property type="match status" value="2"/>
</dbReference>
<dbReference type="InterPro" id="IPR003593">
    <property type="entry name" value="AAA+_ATPase"/>
</dbReference>
<dbReference type="InterPro" id="IPR050168">
    <property type="entry name" value="AAA_ATPase_domain"/>
</dbReference>
<dbReference type="InterPro" id="IPR003959">
    <property type="entry name" value="ATPase_AAA_core"/>
</dbReference>
<dbReference type="InterPro" id="IPR003960">
    <property type="entry name" value="ATPase_AAA_CS"/>
</dbReference>
<dbReference type="InterPro" id="IPR027417">
    <property type="entry name" value="P-loop_NTPase"/>
</dbReference>
<dbReference type="InterPro" id="IPR056995">
    <property type="entry name" value="PEX6_4th_dom"/>
</dbReference>
<dbReference type="InterPro" id="IPR047533">
    <property type="entry name" value="RecA-like_PEX6_r2"/>
</dbReference>
<dbReference type="PANTHER" id="PTHR23077">
    <property type="entry name" value="AAA-FAMILY ATPASE"/>
    <property type="match status" value="1"/>
</dbReference>
<dbReference type="PANTHER" id="PTHR23077:SF9">
    <property type="entry name" value="PEROXISOMAL ATPASE PEX6"/>
    <property type="match status" value="1"/>
</dbReference>
<dbReference type="Pfam" id="PF00004">
    <property type="entry name" value="AAA"/>
    <property type="match status" value="2"/>
</dbReference>
<dbReference type="Pfam" id="PF23315">
    <property type="entry name" value="PEX6_4th"/>
    <property type="match status" value="1"/>
</dbReference>
<dbReference type="SMART" id="SM00382">
    <property type="entry name" value="AAA"/>
    <property type="match status" value="2"/>
</dbReference>
<dbReference type="SUPFAM" id="SSF52540">
    <property type="entry name" value="P-loop containing nucleoside triphosphate hydrolases"/>
    <property type="match status" value="2"/>
</dbReference>
<dbReference type="PROSITE" id="PS00674">
    <property type="entry name" value="AAA"/>
    <property type="match status" value="1"/>
</dbReference>
<comment type="function">
    <text evidence="1">Component of the PEX1-PEX6 AAA ATPase complex, a protein dislocase complex that mediates the ATP-dependent extraction of the PEX5 receptor from peroxisomal membranes, an essential step for PEX5 recycling. Specifically recognizes PEX5 monoubiquitinated at 'Cys-6', and pulls it out of the peroxisome lumen through the PEX2-PEX10-PEX12 retrotranslocation channel. Extraction by the PEX1-PEX6 AAA ATPase complex is accompanied by unfolding of the TPR repeats and release of bound cargo from PEX5.</text>
</comment>
<comment type="catalytic activity">
    <reaction evidence="1">
        <text>ATP + H2O = ADP + phosphate + H(+)</text>
        <dbReference type="Rhea" id="RHEA:13065"/>
        <dbReference type="ChEBI" id="CHEBI:15377"/>
        <dbReference type="ChEBI" id="CHEBI:15378"/>
        <dbReference type="ChEBI" id="CHEBI:30616"/>
        <dbReference type="ChEBI" id="CHEBI:43474"/>
        <dbReference type="ChEBI" id="CHEBI:456216"/>
    </reaction>
    <physiologicalReaction direction="left-to-right" evidence="1">
        <dbReference type="Rhea" id="RHEA:13066"/>
    </physiologicalReaction>
</comment>
<comment type="subunit">
    <text evidence="1">Interacts with PEX1; forming the PEX1-PEX6 AAA ATPase complex, which is composed of a heterohexamer formed by a trimer of PEX1-PEX6 dimers.</text>
</comment>
<comment type="subcellular location">
    <subcellularLocation>
        <location evidence="1">Cytoplasm</location>
        <location evidence="1">Cytosol</location>
    </subcellularLocation>
    <subcellularLocation>
        <location evidence="1">Peroxisome membrane</location>
        <topology evidence="1">Peripheral membrane protein</topology>
        <orientation evidence="1">Cytoplasmic side</orientation>
    </subcellularLocation>
</comment>
<comment type="similarity">
    <text evidence="3">Belongs to the AAA ATPase family.</text>
</comment>
<accession>Q6CPV1</accession>
<protein>
    <recommendedName>
        <fullName evidence="3">Peroxisomal ATPase PEX6</fullName>
        <ecNumber evidence="1">3.6.4.-</ecNumber>
    </recommendedName>
    <alternativeName>
        <fullName>Peroxin-6</fullName>
    </alternativeName>
    <alternativeName>
        <fullName>Peroxisomal biogenesis factor 6</fullName>
    </alternativeName>
</protein>
<proteinExistence type="inferred from homology"/>
<sequence>MVIASLESTHAISTSIVLSSDLWTEFYGTESVSSASPNYVKLTLPSYNKWHHQALISHCDNDDSLPFGSAGLPTNFIKQSQVRPMFSSIEIEPYVQQLPNLDNLVLSLNPDLFNELNQLSKEEQRKFLTLRFNLLFGITVLNVNQVVYPAFCKVTSSSNDFGILTDQTQIVLVPDSNVVEQSRSNDEFTEFDHLFSLHVKIQSLLDPVPVEFLSPPQPDTTDNDLFAFVQPNILLQLGVPSGTFVRVIAEEQEMLVQLFVLFAPNEYECDSLYVSPRVRYVFMNHARVIIQRPNLALNRFSVSNAVTLSRIGCQINAQRRYQDIISHHLALYFSEKQRIVKVGDLIPITFDSNYASMFTDDIRSGQHDTLVWFKVEEIESDSNEEYHIIDSSITRLSTVKITSRELMPKSICDYDRFYNLSPLFHYDEDAFPFAKRLKDILNTAIKCSARNVNVGTSIMLHSSSPNVGKTMLTRSVCAELGFHLIHVDCLSLTSNSNTSDATNKTIGYIRAKIETIISYVEKVVIFLSHLETILEDEQNQQDNTSSKMARQMNVEMADLIEEYTTKYKGTVFVGSTNDIDNIPAIVRSRIKFEIDVPVPTEKQRLQMFRWYFDPYVLNSQTPKLRSLISHNVPLQTVSVQSAGLTPMDIRSIVKAVKYKCYQRLKQNDLLIDMTDITAVINIARDRFSDSIGAPKIPNVTWDDIGGMDVVKGEIMDTIDMPLKHPELFSSGMKKRSGILFYGPPGTGKTLLAKAIASNFSLNFFSVKGPELLNMYIGESEANVRRVFQKARDAKPCVIFFDELDSVAPKRGNQGDSGGVMDRIVSQLLAELDGMSSGGDGVFVIGATNRPDLLDEALLRPGRFDKMLYLGISDTDKKQANIIKALTRKFTLESGIDILDIAKKCPFNYTGADFYALCSDALLNAMTRVAGEVDEKWEKYNMENKKNISLRYWFDNVANENDLKVVVKLQDFELAQQNLIPSVSEDELRHYLRLKSSFESQ</sequence>
<keyword id="KW-0067">ATP-binding</keyword>
<keyword id="KW-0963">Cytoplasm</keyword>
<keyword id="KW-0378">Hydrolase</keyword>
<keyword id="KW-0472">Membrane</keyword>
<keyword id="KW-0547">Nucleotide-binding</keyword>
<keyword id="KW-0576">Peroxisome</keyword>
<keyword id="KW-0962">Peroxisome biogenesis</keyword>
<keyword id="KW-1185">Reference proteome</keyword>